<comment type="function">
    <text evidence="1">DNA-dependent RNA polymerase catalyzes the transcription of DNA into RNA using the four ribonucleoside triphosphates as substrates.</text>
</comment>
<comment type="catalytic activity">
    <reaction evidence="1">
        <text>RNA(n) + a ribonucleoside 5'-triphosphate = RNA(n+1) + diphosphate</text>
        <dbReference type="Rhea" id="RHEA:21248"/>
        <dbReference type="Rhea" id="RHEA-COMP:14527"/>
        <dbReference type="Rhea" id="RHEA-COMP:17342"/>
        <dbReference type="ChEBI" id="CHEBI:33019"/>
        <dbReference type="ChEBI" id="CHEBI:61557"/>
        <dbReference type="ChEBI" id="CHEBI:140395"/>
        <dbReference type="EC" id="2.7.7.6"/>
    </reaction>
</comment>
<comment type="cofactor">
    <cofactor evidence="1">
        <name>Mg(2+)</name>
        <dbReference type="ChEBI" id="CHEBI:18420"/>
    </cofactor>
    <text evidence="1">Binds 1 Mg(2+) ion per subunit.</text>
</comment>
<comment type="cofactor">
    <cofactor evidence="1">
        <name>Zn(2+)</name>
        <dbReference type="ChEBI" id="CHEBI:29105"/>
    </cofactor>
    <text evidence="1">Binds 1 Zn(2+) ion per subunit.</text>
</comment>
<comment type="subunit">
    <text evidence="1">In plastids the minimal PEP RNA polymerase catalytic core is composed of four subunits: alpha, beta, beta', and beta''. When a (nuclear-encoded) sigma factor is associated with the core the holoenzyme is formed, which can initiate transcription.</text>
</comment>
<comment type="subcellular location">
    <subcellularLocation>
        <location evidence="1">Plastid</location>
        <location evidence="1">Chloroplast</location>
    </subcellularLocation>
</comment>
<comment type="similarity">
    <text evidence="1">Belongs to the RNA polymerase beta' chain family. RpoC1 subfamily.</text>
</comment>
<accession>A4QK96</accession>
<geneLocation type="chloroplast"/>
<reference key="1">
    <citation type="submission" date="2007-03" db="EMBL/GenBank/DDBJ databases">
        <title>Sequencing analysis of Barbarea verna chloroplast DNA.</title>
        <authorList>
            <person name="Hosouchi T."/>
            <person name="Tsuruoka H."/>
            <person name="Kotani H."/>
        </authorList>
    </citation>
    <scope>NUCLEOTIDE SEQUENCE [LARGE SCALE GENOMIC DNA]</scope>
</reference>
<dbReference type="EC" id="2.7.7.6" evidence="1"/>
<dbReference type="EMBL" id="AP009370">
    <property type="protein sequence ID" value="BAF50101.1"/>
    <property type="molecule type" value="Genomic_DNA"/>
</dbReference>
<dbReference type="RefSeq" id="YP_001123277.1">
    <property type="nucleotide sequence ID" value="NC_009269.1"/>
</dbReference>
<dbReference type="SMR" id="A4QK96"/>
<dbReference type="GeneID" id="4961949"/>
<dbReference type="GO" id="GO:0009507">
    <property type="term" value="C:chloroplast"/>
    <property type="evidence" value="ECO:0007669"/>
    <property type="project" value="UniProtKB-SubCell"/>
</dbReference>
<dbReference type="GO" id="GO:0000428">
    <property type="term" value="C:DNA-directed RNA polymerase complex"/>
    <property type="evidence" value="ECO:0007669"/>
    <property type="project" value="UniProtKB-KW"/>
</dbReference>
<dbReference type="GO" id="GO:0005739">
    <property type="term" value="C:mitochondrion"/>
    <property type="evidence" value="ECO:0007669"/>
    <property type="project" value="GOC"/>
</dbReference>
<dbReference type="GO" id="GO:0003677">
    <property type="term" value="F:DNA binding"/>
    <property type="evidence" value="ECO:0007669"/>
    <property type="project" value="UniProtKB-UniRule"/>
</dbReference>
<dbReference type="GO" id="GO:0003899">
    <property type="term" value="F:DNA-directed RNA polymerase activity"/>
    <property type="evidence" value="ECO:0007669"/>
    <property type="project" value="UniProtKB-UniRule"/>
</dbReference>
<dbReference type="GO" id="GO:0000287">
    <property type="term" value="F:magnesium ion binding"/>
    <property type="evidence" value="ECO:0007669"/>
    <property type="project" value="UniProtKB-UniRule"/>
</dbReference>
<dbReference type="GO" id="GO:0008270">
    <property type="term" value="F:zinc ion binding"/>
    <property type="evidence" value="ECO:0007669"/>
    <property type="project" value="UniProtKB-UniRule"/>
</dbReference>
<dbReference type="GO" id="GO:0006351">
    <property type="term" value="P:DNA-templated transcription"/>
    <property type="evidence" value="ECO:0007669"/>
    <property type="project" value="UniProtKB-UniRule"/>
</dbReference>
<dbReference type="FunFam" id="1.10.40.90:FF:000002">
    <property type="entry name" value="DNA-directed RNA polymerase subunit"/>
    <property type="match status" value="1"/>
</dbReference>
<dbReference type="FunFam" id="4.10.860.120:FF:000007">
    <property type="entry name" value="DNA-directed RNA polymerase subunit gamma"/>
    <property type="match status" value="1"/>
</dbReference>
<dbReference type="Gene3D" id="1.10.40.90">
    <property type="match status" value="1"/>
</dbReference>
<dbReference type="Gene3D" id="2.40.40.20">
    <property type="match status" value="1"/>
</dbReference>
<dbReference type="Gene3D" id="4.10.860.120">
    <property type="entry name" value="RNA polymerase II, clamp domain"/>
    <property type="match status" value="1"/>
</dbReference>
<dbReference type="Gene3D" id="1.10.274.100">
    <property type="entry name" value="RNA polymerase Rpb1, domain 3"/>
    <property type="match status" value="1"/>
</dbReference>
<dbReference type="HAMAP" id="MF_01323">
    <property type="entry name" value="RNApol_bact_RpoC1"/>
    <property type="match status" value="1"/>
</dbReference>
<dbReference type="InterPro" id="IPR045867">
    <property type="entry name" value="DNA-dir_RpoC_beta_prime"/>
</dbReference>
<dbReference type="InterPro" id="IPR000722">
    <property type="entry name" value="RNA_pol_asu"/>
</dbReference>
<dbReference type="InterPro" id="IPR006592">
    <property type="entry name" value="RNA_pol_N"/>
</dbReference>
<dbReference type="InterPro" id="IPR007080">
    <property type="entry name" value="RNA_pol_Rpb1_1"/>
</dbReference>
<dbReference type="InterPro" id="IPR042102">
    <property type="entry name" value="RNA_pol_Rpb1_3_sf"/>
</dbReference>
<dbReference type="InterPro" id="IPR044893">
    <property type="entry name" value="RNA_pol_Rpb1_clamp_domain"/>
</dbReference>
<dbReference type="InterPro" id="IPR034678">
    <property type="entry name" value="RNApol_RpoC1"/>
</dbReference>
<dbReference type="PANTHER" id="PTHR19376">
    <property type="entry name" value="DNA-DIRECTED RNA POLYMERASE"/>
    <property type="match status" value="1"/>
</dbReference>
<dbReference type="PANTHER" id="PTHR19376:SF54">
    <property type="entry name" value="DNA-DIRECTED RNA POLYMERASE SUBUNIT BETA"/>
    <property type="match status" value="1"/>
</dbReference>
<dbReference type="Pfam" id="PF04997">
    <property type="entry name" value="RNA_pol_Rpb1_1"/>
    <property type="match status" value="1"/>
</dbReference>
<dbReference type="Pfam" id="PF00623">
    <property type="entry name" value="RNA_pol_Rpb1_2"/>
    <property type="match status" value="2"/>
</dbReference>
<dbReference type="SMART" id="SM00663">
    <property type="entry name" value="RPOLA_N"/>
    <property type="match status" value="1"/>
</dbReference>
<dbReference type="SUPFAM" id="SSF64484">
    <property type="entry name" value="beta and beta-prime subunits of DNA dependent RNA-polymerase"/>
    <property type="match status" value="1"/>
</dbReference>
<gene>
    <name evidence="1" type="primary">rpoC1</name>
</gene>
<keyword id="KW-0150">Chloroplast</keyword>
<keyword id="KW-0240">DNA-directed RNA polymerase</keyword>
<keyword id="KW-0460">Magnesium</keyword>
<keyword id="KW-0479">Metal-binding</keyword>
<keyword id="KW-0548">Nucleotidyltransferase</keyword>
<keyword id="KW-0934">Plastid</keyword>
<keyword id="KW-0804">Transcription</keyword>
<keyword id="KW-0808">Transferase</keyword>
<keyword id="KW-0862">Zinc</keyword>
<organism>
    <name type="scientific">Barbarea verna</name>
    <name type="common">Land cress</name>
    <name type="synonym">Erysimum vernum</name>
    <dbReference type="NCBI Taxonomy" id="50458"/>
    <lineage>
        <taxon>Eukaryota</taxon>
        <taxon>Viridiplantae</taxon>
        <taxon>Streptophyta</taxon>
        <taxon>Embryophyta</taxon>
        <taxon>Tracheophyta</taxon>
        <taxon>Spermatophyta</taxon>
        <taxon>Magnoliopsida</taxon>
        <taxon>eudicotyledons</taxon>
        <taxon>Gunneridae</taxon>
        <taxon>Pentapetalae</taxon>
        <taxon>rosids</taxon>
        <taxon>malvids</taxon>
        <taxon>Brassicales</taxon>
        <taxon>Brassicaceae</taxon>
        <taxon>Cardamineae</taxon>
        <taxon>Barbarea</taxon>
    </lineage>
</organism>
<sequence length="680" mass="78556">MIDRYKHQQLRIGLVSPQQISAWATKIIPNGEIVGEVTKPYTFHYKTNKPEKDGLFCERIFGPIKSGICACGNYRVIGDEKDDPKFCEQCGVEFVDSRIRRYQMGYIKLTCPVTHVWYLKRLPSYIANLLDKPLKELEGLVYCDFSFARPITKKPTFLRLRGSFEYEIQSWKYSIPLFFTTQGFDIFRNREISTGAGAIREQLADLDLRIIIENSLVEWKQLGEEGPTGNEWEDRKIVRRKDFLVRRMELAKHFIRTNIEPEWMVLCLLPVLPPELRPIIQIEGGKLMSSDINELYRRVIYRNNTLTDLLTTSRSTPGELVMCQEKLVQEAVDTLLDNGIRGQPMRDGHNKVYKSFSDVIEGKEGRFRETLLGKRVDYSGRSVIVVGPSLSLHRCGLPREIAIELFQTFVIRGLIRQHLASNIGVAKSQIREKKPIVWEILQEVMQGHPVLLNRAPTLHRLGIQSFQPILVEGRTICLHPLVCKGFNADFDGDQMAVHVPLSLEAQAEARLLMFSHMNLLSPAIGDPISVPTQDMLIGLYVLTSGTRRGICANRYNPCNQKNYQNERIYETNYKYTKEPFFCNSYDAIGAYRQKRINLDSPLWLRWQLDQRVIASREVPIEVHYESFGNYHEIYAHYLIVRSVKKETFCIYIRTTVGHISFYREIEEAIQGFSQACSYDT</sequence>
<feature type="chain" id="PRO_0000353475" description="DNA-directed RNA polymerase subunit beta'">
    <location>
        <begin position="1"/>
        <end position="680"/>
    </location>
</feature>
<feature type="binding site" evidence="1">
    <location>
        <position position="69"/>
    </location>
    <ligand>
        <name>Zn(2+)</name>
        <dbReference type="ChEBI" id="CHEBI:29105"/>
    </ligand>
</feature>
<feature type="binding site" evidence="1">
    <location>
        <position position="71"/>
    </location>
    <ligand>
        <name>Zn(2+)</name>
        <dbReference type="ChEBI" id="CHEBI:29105"/>
    </ligand>
</feature>
<feature type="binding site" evidence="1">
    <location>
        <position position="87"/>
    </location>
    <ligand>
        <name>Zn(2+)</name>
        <dbReference type="ChEBI" id="CHEBI:29105"/>
    </ligand>
</feature>
<feature type="binding site" evidence="1">
    <location>
        <position position="90"/>
    </location>
    <ligand>
        <name>Zn(2+)</name>
        <dbReference type="ChEBI" id="CHEBI:29105"/>
    </ligand>
</feature>
<feature type="binding site" evidence="1">
    <location>
        <position position="489"/>
    </location>
    <ligand>
        <name>Mg(2+)</name>
        <dbReference type="ChEBI" id="CHEBI:18420"/>
    </ligand>
</feature>
<feature type="binding site" evidence="1">
    <location>
        <position position="491"/>
    </location>
    <ligand>
        <name>Mg(2+)</name>
        <dbReference type="ChEBI" id="CHEBI:18420"/>
    </ligand>
</feature>
<feature type="binding site" evidence="1">
    <location>
        <position position="493"/>
    </location>
    <ligand>
        <name>Mg(2+)</name>
        <dbReference type="ChEBI" id="CHEBI:18420"/>
    </ligand>
</feature>
<protein>
    <recommendedName>
        <fullName evidence="1">DNA-directed RNA polymerase subunit beta'</fullName>
        <ecNumber evidence="1">2.7.7.6</ecNumber>
    </recommendedName>
    <alternativeName>
        <fullName evidence="1">PEP</fullName>
    </alternativeName>
    <alternativeName>
        <fullName evidence="1">Plastid-encoded RNA polymerase subunit beta'</fullName>
        <shortName evidence="1">RNA polymerase subunit beta'</shortName>
    </alternativeName>
</protein>
<evidence type="ECO:0000255" key="1">
    <source>
        <dbReference type="HAMAP-Rule" id="MF_01323"/>
    </source>
</evidence>
<name>RPOC1_BARVE</name>
<proteinExistence type="inferred from homology"/>